<name>HIS6_PSEAB</name>
<gene>
    <name evidence="1" type="primary">hisF</name>
    <name type="ordered locus">PA14_67880</name>
</gene>
<sequence length="256" mass="27131">MALAKRIIPCLDVDNGRVVKGVKFENIRDAGDPVEIARRYDEQGADEITFLDITASVDGRDTTLHTVERMASQVFIPLTVGGGVRSVQDIRNLLNAGADKVSINTAAVFNPEFVGEAADRFGSQCIVVAIDAKKVSAPGEAPRWEIFTHGGRKPTGLDAVLWAKKMEDLGAGEILLTSMDQDGVKSGYDLGVTRAISEAVNVPVIASGGVGNLEHLAAGILEGKADAVLAASIFHFGEYTVPEAKAYLASRGIVVR</sequence>
<feature type="chain" id="PRO_1000063118" description="Imidazole glycerol phosphate synthase subunit HisF">
    <location>
        <begin position="1"/>
        <end position="256"/>
    </location>
</feature>
<feature type="active site" evidence="1">
    <location>
        <position position="12"/>
    </location>
</feature>
<feature type="active site" evidence="1">
    <location>
        <position position="131"/>
    </location>
</feature>
<organism>
    <name type="scientific">Pseudomonas aeruginosa (strain UCBPP-PA14)</name>
    <dbReference type="NCBI Taxonomy" id="208963"/>
    <lineage>
        <taxon>Bacteria</taxon>
        <taxon>Pseudomonadati</taxon>
        <taxon>Pseudomonadota</taxon>
        <taxon>Gammaproteobacteria</taxon>
        <taxon>Pseudomonadales</taxon>
        <taxon>Pseudomonadaceae</taxon>
        <taxon>Pseudomonas</taxon>
    </lineage>
</organism>
<comment type="function">
    <text evidence="1">IGPS catalyzes the conversion of PRFAR and glutamine to IGP, AICAR and glutamate. The HisF subunit catalyzes the cyclization activity that produces IGP and AICAR from PRFAR using the ammonia provided by the HisH subunit.</text>
</comment>
<comment type="catalytic activity">
    <reaction evidence="1">
        <text>5-[(5-phospho-1-deoxy-D-ribulos-1-ylimino)methylamino]-1-(5-phospho-beta-D-ribosyl)imidazole-4-carboxamide + L-glutamine = D-erythro-1-(imidazol-4-yl)glycerol 3-phosphate + 5-amino-1-(5-phospho-beta-D-ribosyl)imidazole-4-carboxamide + L-glutamate + H(+)</text>
        <dbReference type="Rhea" id="RHEA:24793"/>
        <dbReference type="ChEBI" id="CHEBI:15378"/>
        <dbReference type="ChEBI" id="CHEBI:29985"/>
        <dbReference type="ChEBI" id="CHEBI:58278"/>
        <dbReference type="ChEBI" id="CHEBI:58359"/>
        <dbReference type="ChEBI" id="CHEBI:58475"/>
        <dbReference type="ChEBI" id="CHEBI:58525"/>
        <dbReference type="EC" id="4.3.2.10"/>
    </reaction>
</comment>
<comment type="pathway">
    <text evidence="1">Amino-acid biosynthesis; L-histidine biosynthesis; L-histidine from 5-phospho-alpha-D-ribose 1-diphosphate: step 5/9.</text>
</comment>
<comment type="subunit">
    <text evidence="1">Heterodimer of HisH and HisF.</text>
</comment>
<comment type="subcellular location">
    <subcellularLocation>
        <location evidence="1">Cytoplasm</location>
    </subcellularLocation>
</comment>
<comment type="similarity">
    <text evidence="1">Belongs to the HisA/HisF family.</text>
</comment>
<reference key="1">
    <citation type="journal article" date="2006" name="Genome Biol.">
        <title>Genomic analysis reveals that Pseudomonas aeruginosa virulence is combinatorial.</title>
        <authorList>
            <person name="Lee D.G."/>
            <person name="Urbach J.M."/>
            <person name="Wu G."/>
            <person name="Liberati N.T."/>
            <person name="Feinbaum R.L."/>
            <person name="Miyata S."/>
            <person name="Diggins L.T."/>
            <person name="He J."/>
            <person name="Saucier M."/>
            <person name="Deziel E."/>
            <person name="Friedman L."/>
            <person name="Li L."/>
            <person name="Grills G."/>
            <person name="Montgomery K."/>
            <person name="Kucherlapati R."/>
            <person name="Rahme L.G."/>
            <person name="Ausubel F.M."/>
        </authorList>
    </citation>
    <scope>NUCLEOTIDE SEQUENCE [LARGE SCALE GENOMIC DNA]</scope>
    <source>
        <strain>UCBPP-PA14</strain>
    </source>
</reference>
<evidence type="ECO:0000255" key="1">
    <source>
        <dbReference type="HAMAP-Rule" id="MF_01013"/>
    </source>
</evidence>
<protein>
    <recommendedName>
        <fullName evidence="1">Imidazole glycerol phosphate synthase subunit HisF</fullName>
        <ecNumber evidence="1">4.3.2.10</ecNumber>
    </recommendedName>
    <alternativeName>
        <fullName evidence="1">IGP synthase cyclase subunit</fullName>
    </alternativeName>
    <alternativeName>
        <fullName evidence="1">IGP synthase subunit HisF</fullName>
    </alternativeName>
    <alternativeName>
        <fullName evidence="1">ImGP synthase subunit HisF</fullName>
        <shortName evidence="1">IGPS subunit HisF</shortName>
    </alternativeName>
</protein>
<proteinExistence type="inferred from homology"/>
<keyword id="KW-0028">Amino-acid biosynthesis</keyword>
<keyword id="KW-0963">Cytoplasm</keyword>
<keyword id="KW-0368">Histidine biosynthesis</keyword>
<keyword id="KW-0456">Lyase</keyword>
<dbReference type="EC" id="4.3.2.10" evidence="1"/>
<dbReference type="EMBL" id="CP000438">
    <property type="protein sequence ID" value="ABJ14523.1"/>
    <property type="molecule type" value="Genomic_DNA"/>
</dbReference>
<dbReference type="RefSeq" id="WP_003106334.1">
    <property type="nucleotide sequence ID" value="NZ_CP034244.1"/>
</dbReference>
<dbReference type="SMR" id="Q02EM6"/>
<dbReference type="KEGG" id="pau:PA14_67880"/>
<dbReference type="PseudoCAP" id="PA14_67880"/>
<dbReference type="HOGENOM" id="CLU_048577_4_0_6"/>
<dbReference type="BioCyc" id="PAER208963:G1G74-5723-MONOMER"/>
<dbReference type="UniPathway" id="UPA00031">
    <property type="reaction ID" value="UER00010"/>
</dbReference>
<dbReference type="Proteomes" id="UP000000653">
    <property type="component" value="Chromosome"/>
</dbReference>
<dbReference type="GO" id="GO:0005737">
    <property type="term" value="C:cytoplasm"/>
    <property type="evidence" value="ECO:0007669"/>
    <property type="project" value="UniProtKB-SubCell"/>
</dbReference>
<dbReference type="GO" id="GO:0000107">
    <property type="term" value="F:imidazoleglycerol-phosphate synthase activity"/>
    <property type="evidence" value="ECO:0007669"/>
    <property type="project" value="UniProtKB-UniRule"/>
</dbReference>
<dbReference type="GO" id="GO:0016829">
    <property type="term" value="F:lyase activity"/>
    <property type="evidence" value="ECO:0007669"/>
    <property type="project" value="UniProtKB-KW"/>
</dbReference>
<dbReference type="GO" id="GO:0000105">
    <property type="term" value="P:L-histidine biosynthetic process"/>
    <property type="evidence" value="ECO:0007669"/>
    <property type="project" value="UniProtKB-UniRule"/>
</dbReference>
<dbReference type="CDD" id="cd04731">
    <property type="entry name" value="HisF"/>
    <property type="match status" value="1"/>
</dbReference>
<dbReference type="FunFam" id="3.20.20.70:FF:000006">
    <property type="entry name" value="Imidazole glycerol phosphate synthase subunit HisF"/>
    <property type="match status" value="1"/>
</dbReference>
<dbReference type="Gene3D" id="3.20.20.70">
    <property type="entry name" value="Aldolase class I"/>
    <property type="match status" value="1"/>
</dbReference>
<dbReference type="HAMAP" id="MF_01013">
    <property type="entry name" value="HisF"/>
    <property type="match status" value="1"/>
</dbReference>
<dbReference type="InterPro" id="IPR013785">
    <property type="entry name" value="Aldolase_TIM"/>
</dbReference>
<dbReference type="InterPro" id="IPR006062">
    <property type="entry name" value="His_biosynth"/>
</dbReference>
<dbReference type="InterPro" id="IPR004651">
    <property type="entry name" value="HisF"/>
</dbReference>
<dbReference type="InterPro" id="IPR050064">
    <property type="entry name" value="IGPS_HisA/HisF"/>
</dbReference>
<dbReference type="InterPro" id="IPR011060">
    <property type="entry name" value="RibuloseP-bd_barrel"/>
</dbReference>
<dbReference type="NCBIfam" id="TIGR00735">
    <property type="entry name" value="hisF"/>
    <property type="match status" value="1"/>
</dbReference>
<dbReference type="PANTHER" id="PTHR21235:SF2">
    <property type="entry name" value="IMIDAZOLE GLYCEROL PHOSPHATE SYNTHASE HISHF"/>
    <property type="match status" value="1"/>
</dbReference>
<dbReference type="PANTHER" id="PTHR21235">
    <property type="entry name" value="IMIDAZOLE GLYCEROL PHOSPHATE SYNTHASE SUBUNIT HISF/H IGP SYNTHASE SUBUNIT HISF/H"/>
    <property type="match status" value="1"/>
</dbReference>
<dbReference type="Pfam" id="PF00977">
    <property type="entry name" value="His_biosynth"/>
    <property type="match status" value="1"/>
</dbReference>
<dbReference type="SUPFAM" id="SSF51366">
    <property type="entry name" value="Ribulose-phoshate binding barrel"/>
    <property type="match status" value="1"/>
</dbReference>
<accession>Q02EM6</accession>